<comment type="function">
    <text evidence="1">Catalyzes the specific phosphorylation of the 3-hydroxyl group of shikimic acid using ATP as a cosubstrate.</text>
</comment>
<comment type="catalytic activity">
    <reaction evidence="1">
        <text>shikimate + ATP = 3-phosphoshikimate + ADP + H(+)</text>
        <dbReference type="Rhea" id="RHEA:13121"/>
        <dbReference type="ChEBI" id="CHEBI:15378"/>
        <dbReference type="ChEBI" id="CHEBI:30616"/>
        <dbReference type="ChEBI" id="CHEBI:36208"/>
        <dbReference type="ChEBI" id="CHEBI:145989"/>
        <dbReference type="ChEBI" id="CHEBI:456216"/>
        <dbReference type="EC" id="2.7.1.71"/>
    </reaction>
</comment>
<comment type="cofactor">
    <cofactor evidence="1">
        <name>Mg(2+)</name>
        <dbReference type="ChEBI" id="CHEBI:18420"/>
    </cofactor>
    <text evidence="1">Binds 1 Mg(2+) ion per subunit.</text>
</comment>
<comment type="pathway">
    <text evidence="1">Metabolic intermediate biosynthesis; chorismate biosynthesis; chorismate from D-erythrose 4-phosphate and phosphoenolpyruvate: step 5/7.</text>
</comment>
<comment type="subunit">
    <text evidence="1">Monomer.</text>
</comment>
<comment type="subcellular location">
    <subcellularLocation>
        <location evidence="1">Cytoplasm</location>
    </subcellularLocation>
</comment>
<comment type="similarity">
    <text evidence="1">Belongs to the shikimate kinase family.</text>
</comment>
<dbReference type="EC" id="2.7.1.71" evidence="1"/>
<dbReference type="EMBL" id="CP000544">
    <property type="protein sequence ID" value="ABM63022.1"/>
    <property type="molecule type" value="Genomic_DNA"/>
</dbReference>
<dbReference type="RefSeq" id="WP_011815044.1">
    <property type="nucleotide sequence ID" value="NC_008789.1"/>
</dbReference>
<dbReference type="SMR" id="A1WZB0"/>
<dbReference type="STRING" id="349124.Hhal_2258"/>
<dbReference type="KEGG" id="hha:Hhal_2258"/>
<dbReference type="eggNOG" id="COG0703">
    <property type="taxonomic scope" value="Bacteria"/>
</dbReference>
<dbReference type="HOGENOM" id="CLU_057607_2_2_6"/>
<dbReference type="OrthoDB" id="9800332at2"/>
<dbReference type="UniPathway" id="UPA00053">
    <property type="reaction ID" value="UER00088"/>
</dbReference>
<dbReference type="Proteomes" id="UP000000647">
    <property type="component" value="Chromosome"/>
</dbReference>
<dbReference type="GO" id="GO:0005829">
    <property type="term" value="C:cytosol"/>
    <property type="evidence" value="ECO:0007669"/>
    <property type="project" value="TreeGrafter"/>
</dbReference>
<dbReference type="GO" id="GO:0005524">
    <property type="term" value="F:ATP binding"/>
    <property type="evidence" value="ECO:0007669"/>
    <property type="project" value="UniProtKB-UniRule"/>
</dbReference>
<dbReference type="GO" id="GO:0000287">
    <property type="term" value="F:magnesium ion binding"/>
    <property type="evidence" value="ECO:0007669"/>
    <property type="project" value="UniProtKB-UniRule"/>
</dbReference>
<dbReference type="GO" id="GO:0004765">
    <property type="term" value="F:shikimate kinase activity"/>
    <property type="evidence" value="ECO:0007669"/>
    <property type="project" value="UniProtKB-UniRule"/>
</dbReference>
<dbReference type="GO" id="GO:0008652">
    <property type="term" value="P:amino acid biosynthetic process"/>
    <property type="evidence" value="ECO:0007669"/>
    <property type="project" value="UniProtKB-KW"/>
</dbReference>
<dbReference type="GO" id="GO:0009073">
    <property type="term" value="P:aromatic amino acid family biosynthetic process"/>
    <property type="evidence" value="ECO:0007669"/>
    <property type="project" value="UniProtKB-KW"/>
</dbReference>
<dbReference type="GO" id="GO:0009423">
    <property type="term" value="P:chorismate biosynthetic process"/>
    <property type="evidence" value="ECO:0007669"/>
    <property type="project" value="UniProtKB-UniRule"/>
</dbReference>
<dbReference type="CDD" id="cd00464">
    <property type="entry name" value="SK"/>
    <property type="match status" value="1"/>
</dbReference>
<dbReference type="Gene3D" id="3.40.50.300">
    <property type="entry name" value="P-loop containing nucleotide triphosphate hydrolases"/>
    <property type="match status" value="1"/>
</dbReference>
<dbReference type="HAMAP" id="MF_00109">
    <property type="entry name" value="Shikimate_kinase"/>
    <property type="match status" value="1"/>
</dbReference>
<dbReference type="InterPro" id="IPR027417">
    <property type="entry name" value="P-loop_NTPase"/>
</dbReference>
<dbReference type="InterPro" id="IPR031322">
    <property type="entry name" value="Shikimate/glucono_kinase"/>
</dbReference>
<dbReference type="InterPro" id="IPR000623">
    <property type="entry name" value="Shikimate_kinase/TSH1"/>
</dbReference>
<dbReference type="InterPro" id="IPR023000">
    <property type="entry name" value="Shikimate_kinase_CS"/>
</dbReference>
<dbReference type="NCBIfam" id="NF003456">
    <property type="entry name" value="PRK05057.1"/>
    <property type="match status" value="1"/>
</dbReference>
<dbReference type="PANTHER" id="PTHR21087">
    <property type="entry name" value="SHIKIMATE KINASE"/>
    <property type="match status" value="1"/>
</dbReference>
<dbReference type="PANTHER" id="PTHR21087:SF16">
    <property type="entry name" value="SHIKIMATE KINASE 1, CHLOROPLASTIC"/>
    <property type="match status" value="1"/>
</dbReference>
<dbReference type="Pfam" id="PF01202">
    <property type="entry name" value="SKI"/>
    <property type="match status" value="1"/>
</dbReference>
<dbReference type="PRINTS" id="PR01100">
    <property type="entry name" value="SHIKIMTKNASE"/>
</dbReference>
<dbReference type="SUPFAM" id="SSF52540">
    <property type="entry name" value="P-loop containing nucleoside triphosphate hydrolases"/>
    <property type="match status" value="1"/>
</dbReference>
<dbReference type="PROSITE" id="PS01128">
    <property type="entry name" value="SHIKIMATE_KINASE"/>
    <property type="match status" value="1"/>
</dbReference>
<evidence type="ECO:0000255" key="1">
    <source>
        <dbReference type="HAMAP-Rule" id="MF_00109"/>
    </source>
</evidence>
<accession>A1WZB0</accession>
<feature type="chain" id="PRO_1000119055" description="Shikimate kinase">
    <location>
        <begin position="1"/>
        <end position="177"/>
    </location>
</feature>
<feature type="binding site" evidence="1">
    <location>
        <begin position="17"/>
        <end position="22"/>
    </location>
    <ligand>
        <name>ATP</name>
        <dbReference type="ChEBI" id="CHEBI:30616"/>
    </ligand>
</feature>
<feature type="binding site" evidence="1">
    <location>
        <position position="21"/>
    </location>
    <ligand>
        <name>Mg(2+)</name>
        <dbReference type="ChEBI" id="CHEBI:18420"/>
    </ligand>
</feature>
<feature type="binding site" evidence="1">
    <location>
        <position position="39"/>
    </location>
    <ligand>
        <name>substrate</name>
    </ligand>
</feature>
<feature type="binding site" evidence="1">
    <location>
        <position position="63"/>
    </location>
    <ligand>
        <name>substrate</name>
    </ligand>
</feature>
<feature type="binding site" evidence="1">
    <location>
        <position position="85"/>
    </location>
    <ligand>
        <name>substrate</name>
    </ligand>
</feature>
<feature type="binding site" evidence="1">
    <location>
        <position position="123"/>
    </location>
    <ligand>
        <name>ATP</name>
        <dbReference type="ChEBI" id="CHEBI:30616"/>
    </ligand>
</feature>
<feature type="binding site" evidence="1">
    <location>
        <position position="142"/>
    </location>
    <ligand>
        <name>substrate</name>
    </ligand>
</feature>
<feature type="binding site" evidence="1">
    <location>
        <position position="160"/>
    </location>
    <ligand>
        <name>ATP</name>
        <dbReference type="ChEBI" id="CHEBI:30616"/>
    </ligand>
</feature>
<organism>
    <name type="scientific">Halorhodospira halophila (strain DSM 244 / SL1)</name>
    <name type="common">Ectothiorhodospira halophila (strain DSM 244 / SL1)</name>
    <dbReference type="NCBI Taxonomy" id="349124"/>
    <lineage>
        <taxon>Bacteria</taxon>
        <taxon>Pseudomonadati</taxon>
        <taxon>Pseudomonadota</taxon>
        <taxon>Gammaproteobacteria</taxon>
        <taxon>Chromatiales</taxon>
        <taxon>Ectothiorhodospiraceae</taxon>
        <taxon>Halorhodospira</taxon>
    </lineage>
</organism>
<protein>
    <recommendedName>
        <fullName evidence="1">Shikimate kinase</fullName>
        <shortName evidence="1">SK</shortName>
        <ecNumber evidence="1">2.7.1.71</ecNumber>
    </recommendedName>
</protein>
<sequence>MAHWRTPSRIFLVGPMGAGKSTVGRELANLLGLEFIDSDAAIEARTGVSIPWIFDIEGEAGFRAREAAVIDELTGRDGVVVATGGGAVTTPANRDLLGARGVVVYLYTPVSVQLQRTRHDTNRPLLQSDDPEARLQSLLAERDPLYREVADVVVETTGGRARSVARRIVEALQGQPS</sequence>
<name>AROK_HALHL</name>
<gene>
    <name evidence="1" type="primary">aroK</name>
    <name type="ordered locus">Hhal_2258</name>
</gene>
<reference key="1">
    <citation type="submission" date="2006-12" db="EMBL/GenBank/DDBJ databases">
        <title>Complete sequence of Halorhodospira halophila SL1.</title>
        <authorList>
            <consortium name="US DOE Joint Genome Institute"/>
            <person name="Copeland A."/>
            <person name="Lucas S."/>
            <person name="Lapidus A."/>
            <person name="Barry K."/>
            <person name="Detter J.C."/>
            <person name="Glavina del Rio T."/>
            <person name="Hammon N."/>
            <person name="Israni S."/>
            <person name="Dalin E."/>
            <person name="Tice H."/>
            <person name="Pitluck S."/>
            <person name="Saunders E."/>
            <person name="Brettin T."/>
            <person name="Bruce D."/>
            <person name="Han C."/>
            <person name="Tapia R."/>
            <person name="Schmutz J."/>
            <person name="Larimer F."/>
            <person name="Land M."/>
            <person name="Hauser L."/>
            <person name="Kyrpides N."/>
            <person name="Mikhailova N."/>
            <person name="Hoff W."/>
            <person name="Richardson P."/>
        </authorList>
    </citation>
    <scope>NUCLEOTIDE SEQUENCE [LARGE SCALE GENOMIC DNA]</scope>
    <source>
        <strain>DSM 244 / SL1</strain>
    </source>
</reference>
<keyword id="KW-0028">Amino-acid biosynthesis</keyword>
<keyword id="KW-0057">Aromatic amino acid biosynthesis</keyword>
<keyword id="KW-0067">ATP-binding</keyword>
<keyword id="KW-0963">Cytoplasm</keyword>
<keyword id="KW-0418">Kinase</keyword>
<keyword id="KW-0460">Magnesium</keyword>
<keyword id="KW-0479">Metal-binding</keyword>
<keyword id="KW-0547">Nucleotide-binding</keyword>
<keyword id="KW-1185">Reference proteome</keyword>
<keyword id="KW-0808">Transferase</keyword>
<proteinExistence type="inferred from homology"/>